<gene>
    <name evidence="1" type="primary">rbcL</name>
</gene>
<name>RBL_PHAVU</name>
<proteinExistence type="inferred from homology"/>
<accession>A4GG89</accession>
<accession>A8W828</accession>
<evidence type="ECO:0000255" key="1">
    <source>
        <dbReference type="HAMAP-Rule" id="MF_01338"/>
    </source>
</evidence>
<organism>
    <name type="scientific">Phaseolus vulgaris</name>
    <name type="common">Kidney bean</name>
    <name type="synonym">French bean</name>
    <dbReference type="NCBI Taxonomy" id="3885"/>
    <lineage>
        <taxon>Eukaryota</taxon>
        <taxon>Viridiplantae</taxon>
        <taxon>Streptophyta</taxon>
        <taxon>Embryophyta</taxon>
        <taxon>Tracheophyta</taxon>
        <taxon>Spermatophyta</taxon>
        <taxon>Magnoliopsida</taxon>
        <taxon>eudicotyledons</taxon>
        <taxon>Gunneridae</taxon>
        <taxon>Pentapetalae</taxon>
        <taxon>rosids</taxon>
        <taxon>fabids</taxon>
        <taxon>Fabales</taxon>
        <taxon>Fabaceae</taxon>
        <taxon>Papilionoideae</taxon>
        <taxon>50 kb inversion clade</taxon>
        <taxon>NPAAA clade</taxon>
        <taxon>indigoferoid/millettioid clade</taxon>
        <taxon>Phaseoleae</taxon>
        <taxon>Phaseolus</taxon>
    </lineage>
</organism>
<dbReference type="EC" id="4.1.1.39" evidence="1"/>
<dbReference type="EMBL" id="DQ886273">
    <property type="protein sequence ID" value="ABH88070.1"/>
    <property type="molecule type" value="Genomic_DNA"/>
</dbReference>
<dbReference type="EMBL" id="EU196765">
    <property type="protein sequence ID" value="ABW22798.1"/>
    <property type="molecule type" value="Genomic_DNA"/>
</dbReference>
<dbReference type="RefSeq" id="YP_001122790.1">
    <property type="nucleotide sequence ID" value="NC_009259.1"/>
</dbReference>
<dbReference type="SMR" id="A4GG89"/>
<dbReference type="GeneID" id="4961750"/>
<dbReference type="KEGG" id="pvu:4961750"/>
<dbReference type="eggNOG" id="ENOG502QTI9">
    <property type="taxonomic scope" value="Eukaryota"/>
</dbReference>
<dbReference type="GO" id="GO:0009507">
    <property type="term" value="C:chloroplast"/>
    <property type="evidence" value="ECO:0007669"/>
    <property type="project" value="UniProtKB-SubCell"/>
</dbReference>
<dbReference type="GO" id="GO:0000287">
    <property type="term" value="F:magnesium ion binding"/>
    <property type="evidence" value="ECO:0007669"/>
    <property type="project" value="UniProtKB-UniRule"/>
</dbReference>
<dbReference type="GO" id="GO:0004497">
    <property type="term" value="F:monooxygenase activity"/>
    <property type="evidence" value="ECO:0007669"/>
    <property type="project" value="UniProtKB-KW"/>
</dbReference>
<dbReference type="GO" id="GO:0016984">
    <property type="term" value="F:ribulose-bisphosphate carboxylase activity"/>
    <property type="evidence" value="ECO:0007669"/>
    <property type="project" value="UniProtKB-UniRule"/>
</dbReference>
<dbReference type="GO" id="GO:0009853">
    <property type="term" value="P:photorespiration"/>
    <property type="evidence" value="ECO:0007669"/>
    <property type="project" value="UniProtKB-KW"/>
</dbReference>
<dbReference type="GO" id="GO:0019253">
    <property type="term" value="P:reductive pentose-phosphate cycle"/>
    <property type="evidence" value="ECO:0007669"/>
    <property type="project" value="UniProtKB-UniRule"/>
</dbReference>
<dbReference type="CDD" id="cd08212">
    <property type="entry name" value="RuBisCO_large_I"/>
    <property type="match status" value="1"/>
</dbReference>
<dbReference type="FunFam" id="3.20.20.110:FF:000001">
    <property type="entry name" value="Ribulose bisphosphate carboxylase large chain"/>
    <property type="match status" value="1"/>
</dbReference>
<dbReference type="FunFam" id="3.30.70.150:FF:000001">
    <property type="entry name" value="Ribulose bisphosphate carboxylase large chain"/>
    <property type="match status" value="1"/>
</dbReference>
<dbReference type="Gene3D" id="3.20.20.110">
    <property type="entry name" value="Ribulose bisphosphate carboxylase, large subunit, C-terminal domain"/>
    <property type="match status" value="1"/>
</dbReference>
<dbReference type="Gene3D" id="3.30.70.150">
    <property type="entry name" value="RuBisCO large subunit, N-terminal domain"/>
    <property type="match status" value="1"/>
</dbReference>
<dbReference type="HAMAP" id="MF_01338">
    <property type="entry name" value="RuBisCO_L_type1"/>
    <property type="match status" value="1"/>
</dbReference>
<dbReference type="InterPro" id="IPR033966">
    <property type="entry name" value="RuBisCO"/>
</dbReference>
<dbReference type="InterPro" id="IPR020878">
    <property type="entry name" value="RuBisCo_large_chain_AS"/>
</dbReference>
<dbReference type="InterPro" id="IPR000685">
    <property type="entry name" value="RuBisCO_lsu_C"/>
</dbReference>
<dbReference type="InterPro" id="IPR036376">
    <property type="entry name" value="RuBisCO_lsu_C_sf"/>
</dbReference>
<dbReference type="InterPro" id="IPR017443">
    <property type="entry name" value="RuBisCO_lsu_fd_N"/>
</dbReference>
<dbReference type="InterPro" id="IPR036422">
    <property type="entry name" value="RuBisCO_lsu_N_sf"/>
</dbReference>
<dbReference type="InterPro" id="IPR020888">
    <property type="entry name" value="RuBisCO_lsuI"/>
</dbReference>
<dbReference type="NCBIfam" id="NF003252">
    <property type="entry name" value="PRK04208.1"/>
    <property type="match status" value="1"/>
</dbReference>
<dbReference type="PANTHER" id="PTHR42704">
    <property type="entry name" value="RIBULOSE BISPHOSPHATE CARBOXYLASE"/>
    <property type="match status" value="1"/>
</dbReference>
<dbReference type="PANTHER" id="PTHR42704:SF15">
    <property type="entry name" value="RIBULOSE BISPHOSPHATE CARBOXYLASE LARGE CHAIN"/>
    <property type="match status" value="1"/>
</dbReference>
<dbReference type="Pfam" id="PF00016">
    <property type="entry name" value="RuBisCO_large"/>
    <property type="match status" value="1"/>
</dbReference>
<dbReference type="Pfam" id="PF02788">
    <property type="entry name" value="RuBisCO_large_N"/>
    <property type="match status" value="1"/>
</dbReference>
<dbReference type="SFLD" id="SFLDG01052">
    <property type="entry name" value="RuBisCO"/>
    <property type="match status" value="1"/>
</dbReference>
<dbReference type="SFLD" id="SFLDS00014">
    <property type="entry name" value="RuBisCO"/>
    <property type="match status" value="1"/>
</dbReference>
<dbReference type="SFLD" id="SFLDG00301">
    <property type="entry name" value="RuBisCO-like_proteins"/>
    <property type="match status" value="1"/>
</dbReference>
<dbReference type="SUPFAM" id="SSF51649">
    <property type="entry name" value="RuBisCo, C-terminal domain"/>
    <property type="match status" value="1"/>
</dbReference>
<dbReference type="SUPFAM" id="SSF54966">
    <property type="entry name" value="RuBisCO, large subunit, small (N-terminal) domain"/>
    <property type="match status" value="1"/>
</dbReference>
<dbReference type="PROSITE" id="PS00157">
    <property type="entry name" value="RUBISCO_LARGE"/>
    <property type="match status" value="1"/>
</dbReference>
<reference key="1">
    <citation type="journal article" date="2007" name="BMC Genomics">
        <title>Rapid evolutionary change of common bean (Phaseolus vulgaris L) plastome, and the genomic diversification of legume chloroplasts.</title>
        <authorList>
            <person name="Guo X."/>
            <person name="Castillo-Ramirez S."/>
            <person name="Gonzalez V."/>
            <person name="Bustos P."/>
            <person name="Fernandez-Vazquez J.L."/>
            <person name="Santamaria R.I."/>
            <person name="Arellano J."/>
            <person name="Cevallos M.A."/>
            <person name="Davila G."/>
        </authorList>
    </citation>
    <scope>NUCLEOTIDE SEQUENCE [LARGE SCALE GENOMIC DNA]</scope>
    <source>
        <strain>cv. Negro Jamapa</strain>
    </source>
</reference>
<reference key="2">
    <citation type="submission" date="2007-10" db="EMBL/GenBank/DDBJ databases">
        <title>Complete nucleotide sequence of the plastid genome of the common bean, Phaseolus vulgaris.</title>
        <authorList>
            <person name="Moore M.J."/>
            <person name="Triplett E.W."/>
            <person name="Broughton W.J."/>
            <person name="Soltis P.S."/>
            <person name="Soltis D.E."/>
        </authorList>
    </citation>
    <scope>NUCLEOTIDE SEQUENCE [LARGE SCALE GENOMIC DNA]</scope>
</reference>
<protein>
    <recommendedName>
        <fullName evidence="1">Ribulose bisphosphate carboxylase large chain</fullName>
        <shortName evidence="1">RuBisCO large subunit</shortName>
        <ecNumber evidence="1">4.1.1.39</ecNumber>
    </recommendedName>
</protein>
<feature type="propeptide" id="PRO_0000300007" evidence="1">
    <location>
        <begin position="1"/>
        <end position="2"/>
    </location>
</feature>
<feature type="chain" id="PRO_0000300008" description="Ribulose bisphosphate carboxylase large chain">
    <location>
        <begin position="3"/>
        <end position="476"/>
    </location>
</feature>
<feature type="active site" description="Proton acceptor" evidence="1">
    <location>
        <position position="175"/>
    </location>
</feature>
<feature type="active site" description="Proton acceptor" evidence="1">
    <location>
        <position position="294"/>
    </location>
</feature>
<feature type="binding site" description="in homodimeric partner" evidence="1">
    <location>
        <position position="123"/>
    </location>
    <ligand>
        <name>substrate</name>
    </ligand>
</feature>
<feature type="binding site" evidence="1">
    <location>
        <position position="173"/>
    </location>
    <ligand>
        <name>substrate</name>
    </ligand>
</feature>
<feature type="binding site" evidence="1">
    <location>
        <position position="177"/>
    </location>
    <ligand>
        <name>substrate</name>
    </ligand>
</feature>
<feature type="binding site" description="via carbamate group" evidence="1">
    <location>
        <position position="201"/>
    </location>
    <ligand>
        <name>Mg(2+)</name>
        <dbReference type="ChEBI" id="CHEBI:18420"/>
    </ligand>
</feature>
<feature type="binding site" evidence="1">
    <location>
        <position position="203"/>
    </location>
    <ligand>
        <name>Mg(2+)</name>
        <dbReference type="ChEBI" id="CHEBI:18420"/>
    </ligand>
</feature>
<feature type="binding site" evidence="1">
    <location>
        <position position="204"/>
    </location>
    <ligand>
        <name>Mg(2+)</name>
        <dbReference type="ChEBI" id="CHEBI:18420"/>
    </ligand>
</feature>
<feature type="binding site" evidence="1">
    <location>
        <position position="295"/>
    </location>
    <ligand>
        <name>substrate</name>
    </ligand>
</feature>
<feature type="binding site" evidence="1">
    <location>
        <position position="327"/>
    </location>
    <ligand>
        <name>substrate</name>
    </ligand>
</feature>
<feature type="binding site" evidence="1">
    <location>
        <position position="379"/>
    </location>
    <ligand>
        <name>substrate</name>
    </ligand>
</feature>
<feature type="site" description="Transition state stabilizer" evidence="1">
    <location>
        <position position="334"/>
    </location>
</feature>
<feature type="modified residue" description="N-acetylproline" evidence="1">
    <location>
        <position position="3"/>
    </location>
</feature>
<feature type="modified residue" description="N6,N6,N6-trimethyllysine" evidence="1">
    <location>
        <position position="14"/>
    </location>
</feature>
<feature type="modified residue" description="N6-carboxylysine" evidence="1">
    <location>
        <position position="201"/>
    </location>
</feature>
<feature type="disulfide bond" description="Interchain; in linked form" evidence="1">
    <location>
        <position position="247"/>
    </location>
</feature>
<keyword id="KW-0007">Acetylation</keyword>
<keyword id="KW-0113">Calvin cycle</keyword>
<keyword id="KW-0120">Carbon dioxide fixation</keyword>
<keyword id="KW-0150">Chloroplast</keyword>
<keyword id="KW-1015">Disulfide bond</keyword>
<keyword id="KW-0456">Lyase</keyword>
<keyword id="KW-0460">Magnesium</keyword>
<keyword id="KW-0479">Metal-binding</keyword>
<keyword id="KW-0488">Methylation</keyword>
<keyword id="KW-0503">Monooxygenase</keyword>
<keyword id="KW-0560">Oxidoreductase</keyword>
<keyword id="KW-0601">Photorespiration</keyword>
<keyword id="KW-0602">Photosynthesis</keyword>
<keyword id="KW-0934">Plastid</keyword>
<sequence>MSPQTETKASVGFKAGVKDYKLTYYTPDYETKDTDILAAFRVTPQPGVPPEEAGAAVAAESSTGTWTTVWTDGLTSLDRYKGRCYHIEPVAGEENQFIAYVAYPLDLFEEGSVTNMFTSIVGNVFGFKALRALRLEDLRIPTAYIKTFQGPPHGIQVERDKLNKYGRPLLGCTIKPKLGLSAKNYGRAVYECLRGGLDFTKDDENVNSQPFMRWRDRFLFCAEAIYKAQAETGEIKGHYLNATAGTCEEMIKRAVFARELGVPIVMHDYLTGGFTANTSLAHYCRDNGLLLHIHRAMHAVIDRQKNHGMHFRVLAKALRLSGGDHVHSGTVVGKLEGEREITLGFVDLLRDDFIEKDRSRGIYFTQDWVSLPGVLPVASGGIHVWHMPALTEIFGDDSVLQFGGGTLGHPWGNAPGAVANRVALEACVQARNEGRDLAREGNEIIREASKWSPELAAACEVWKEIKFEFEAMDTLD</sequence>
<geneLocation type="chloroplast"/>
<comment type="function">
    <text evidence="1">RuBisCO catalyzes two reactions: the carboxylation of D-ribulose 1,5-bisphosphate, the primary event in carbon dioxide fixation, as well as the oxidative fragmentation of the pentose substrate in the photorespiration process. Both reactions occur simultaneously and in competition at the same active site.</text>
</comment>
<comment type="catalytic activity">
    <reaction evidence="1">
        <text>2 (2R)-3-phosphoglycerate + 2 H(+) = D-ribulose 1,5-bisphosphate + CO2 + H2O</text>
        <dbReference type="Rhea" id="RHEA:23124"/>
        <dbReference type="ChEBI" id="CHEBI:15377"/>
        <dbReference type="ChEBI" id="CHEBI:15378"/>
        <dbReference type="ChEBI" id="CHEBI:16526"/>
        <dbReference type="ChEBI" id="CHEBI:57870"/>
        <dbReference type="ChEBI" id="CHEBI:58272"/>
        <dbReference type="EC" id="4.1.1.39"/>
    </reaction>
</comment>
<comment type="catalytic activity">
    <reaction evidence="1">
        <text>D-ribulose 1,5-bisphosphate + O2 = 2-phosphoglycolate + (2R)-3-phosphoglycerate + 2 H(+)</text>
        <dbReference type="Rhea" id="RHEA:36631"/>
        <dbReference type="ChEBI" id="CHEBI:15378"/>
        <dbReference type="ChEBI" id="CHEBI:15379"/>
        <dbReference type="ChEBI" id="CHEBI:57870"/>
        <dbReference type="ChEBI" id="CHEBI:58033"/>
        <dbReference type="ChEBI" id="CHEBI:58272"/>
    </reaction>
</comment>
<comment type="cofactor">
    <cofactor evidence="1">
        <name>Mg(2+)</name>
        <dbReference type="ChEBI" id="CHEBI:18420"/>
    </cofactor>
    <text evidence="1">Binds 1 Mg(2+) ion per subunit.</text>
</comment>
<comment type="subunit">
    <text evidence="1">Heterohexadecamer of 8 large chains and 8 small chains; disulfide-linked. The disulfide link is formed within the large subunit homodimers.</text>
</comment>
<comment type="subcellular location">
    <subcellularLocation>
        <location>Plastid</location>
        <location>Chloroplast</location>
    </subcellularLocation>
</comment>
<comment type="PTM">
    <text evidence="1">The disulfide bond which can form in the large chain dimeric partners within the hexadecamer appears to be associated with oxidative stress and protein turnover.</text>
</comment>
<comment type="miscellaneous">
    <text evidence="1">The basic functional RuBisCO is composed of a large chain homodimer in a 'head-to-tail' conformation. In form I RuBisCO this homodimer is arranged in a barrel-like tetramer with the small subunits forming a tetrameric 'cap' on each end of the 'barrel'.</text>
</comment>
<comment type="similarity">
    <text evidence="1">Belongs to the RuBisCO large chain family. Type I subfamily.</text>
</comment>